<accession>Q5LG55</accession>
<keyword id="KW-0687">Ribonucleoprotein</keyword>
<keyword id="KW-0689">Ribosomal protein</keyword>
<keyword id="KW-0694">RNA-binding</keyword>
<keyword id="KW-0699">rRNA-binding</keyword>
<comment type="function">
    <text evidence="1">This is one of the proteins that binds to the 5S RNA in the ribosome where it forms part of the central protuberance.</text>
</comment>
<comment type="subunit">
    <text evidence="1">Part of the 50S ribosomal subunit; part of the 5S rRNA/L5/L18/L25 subcomplex. Contacts the 5S rRNA. Binds to the 5S rRNA independently of L5 and L18.</text>
</comment>
<comment type="similarity">
    <text evidence="1">Belongs to the bacterial ribosomal protein bL25 family. CTC subfamily.</text>
</comment>
<proteinExistence type="inferred from homology"/>
<protein>
    <recommendedName>
        <fullName evidence="1">Large ribosomal subunit protein bL25</fullName>
    </recommendedName>
    <alternativeName>
        <fullName evidence="2">50S ribosomal protein L25</fullName>
    </alternativeName>
    <alternativeName>
        <fullName evidence="1">General stress protein CTC</fullName>
    </alternativeName>
</protein>
<sequence>MRSIEVKGTARTIAERSSEQARALKEIRNNGGVPCVLYGGEEVVHFTVTNEGLRNLVYTPHIYVVDLVIDGKKVNAILKDIQFHPVKDTILHVDFYQIDEAKPIVMEVPVQLEGLAEGVKAGGKLALQMRKLKVKALYNIIPEKLTINVSHLGLGKTVKVGELSYEGLELLNAKEAVVCAVKLTRAARGAAAAAGK</sequence>
<feature type="chain" id="PRO_0000244192" description="Large ribosomal subunit protein bL25">
    <location>
        <begin position="1"/>
        <end position="196"/>
    </location>
</feature>
<reference key="1">
    <citation type="journal article" date="2005" name="Science">
        <title>Extensive DNA inversions in the B. fragilis genome control variable gene expression.</title>
        <authorList>
            <person name="Cerdeno-Tarraga A.-M."/>
            <person name="Patrick S."/>
            <person name="Crossman L.C."/>
            <person name="Blakely G."/>
            <person name="Abratt V."/>
            <person name="Lennard N."/>
            <person name="Poxton I."/>
            <person name="Duerden B."/>
            <person name="Harris B."/>
            <person name="Quail M.A."/>
            <person name="Barron A."/>
            <person name="Clark L."/>
            <person name="Corton C."/>
            <person name="Doggett J."/>
            <person name="Holden M.T.G."/>
            <person name="Larke N."/>
            <person name="Line A."/>
            <person name="Lord A."/>
            <person name="Norbertczak H."/>
            <person name="Ormond D."/>
            <person name="Price C."/>
            <person name="Rabbinowitsch E."/>
            <person name="Woodward J."/>
            <person name="Barrell B.G."/>
            <person name="Parkhill J."/>
        </authorList>
    </citation>
    <scope>NUCLEOTIDE SEQUENCE [LARGE SCALE GENOMIC DNA]</scope>
    <source>
        <strain>ATCC 25285 / DSM 2151 / CCUG 4856 / JCM 11019 / LMG 10263 / NCTC 9343 / Onslow / VPI 2553 / EN-2</strain>
    </source>
</reference>
<gene>
    <name evidence="1" type="primary">rplY</name>
    <name evidence="1" type="synonym">ctc</name>
    <name type="ordered locus">BF1164</name>
</gene>
<organism>
    <name type="scientific">Bacteroides fragilis (strain ATCC 25285 / DSM 2151 / CCUG 4856 / JCM 11019 / LMG 10263 / NCTC 9343 / Onslow / VPI 2553 / EN-2)</name>
    <dbReference type="NCBI Taxonomy" id="272559"/>
    <lineage>
        <taxon>Bacteria</taxon>
        <taxon>Pseudomonadati</taxon>
        <taxon>Bacteroidota</taxon>
        <taxon>Bacteroidia</taxon>
        <taxon>Bacteroidales</taxon>
        <taxon>Bacteroidaceae</taxon>
        <taxon>Bacteroides</taxon>
    </lineage>
</organism>
<evidence type="ECO:0000255" key="1">
    <source>
        <dbReference type="HAMAP-Rule" id="MF_01334"/>
    </source>
</evidence>
<evidence type="ECO:0000305" key="2"/>
<dbReference type="EMBL" id="CR626927">
    <property type="protein sequence ID" value="CAH06886.1"/>
    <property type="molecule type" value="Genomic_DNA"/>
</dbReference>
<dbReference type="RefSeq" id="WP_005785759.1">
    <property type="nucleotide sequence ID" value="NZ_UFTH01000001.1"/>
</dbReference>
<dbReference type="SMR" id="Q5LG55"/>
<dbReference type="PaxDb" id="272559-BF9343_1105"/>
<dbReference type="KEGG" id="bfs:BF9343_1105"/>
<dbReference type="eggNOG" id="COG1825">
    <property type="taxonomic scope" value="Bacteria"/>
</dbReference>
<dbReference type="HOGENOM" id="CLU_075939_2_1_10"/>
<dbReference type="Proteomes" id="UP000006731">
    <property type="component" value="Chromosome"/>
</dbReference>
<dbReference type="GO" id="GO:0022625">
    <property type="term" value="C:cytosolic large ribosomal subunit"/>
    <property type="evidence" value="ECO:0007669"/>
    <property type="project" value="TreeGrafter"/>
</dbReference>
<dbReference type="GO" id="GO:0008097">
    <property type="term" value="F:5S rRNA binding"/>
    <property type="evidence" value="ECO:0007669"/>
    <property type="project" value="InterPro"/>
</dbReference>
<dbReference type="GO" id="GO:0003735">
    <property type="term" value="F:structural constituent of ribosome"/>
    <property type="evidence" value="ECO:0007669"/>
    <property type="project" value="InterPro"/>
</dbReference>
<dbReference type="GO" id="GO:0006412">
    <property type="term" value="P:translation"/>
    <property type="evidence" value="ECO:0007669"/>
    <property type="project" value="UniProtKB-UniRule"/>
</dbReference>
<dbReference type="CDD" id="cd00495">
    <property type="entry name" value="Ribosomal_L25_TL5_CTC"/>
    <property type="match status" value="1"/>
</dbReference>
<dbReference type="FunFam" id="2.170.120.20:FF:000001">
    <property type="entry name" value="50S ribosomal protein L25"/>
    <property type="match status" value="1"/>
</dbReference>
<dbReference type="FunFam" id="2.40.240.10:FF:000009">
    <property type="entry name" value="50S ribosomal protein L25"/>
    <property type="match status" value="1"/>
</dbReference>
<dbReference type="Gene3D" id="2.170.120.20">
    <property type="entry name" value="Ribosomal protein L25, beta domain"/>
    <property type="match status" value="1"/>
</dbReference>
<dbReference type="Gene3D" id="2.40.240.10">
    <property type="entry name" value="Ribosomal Protein L25, Chain P"/>
    <property type="match status" value="1"/>
</dbReference>
<dbReference type="HAMAP" id="MF_01334">
    <property type="entry name" value="Ribosomal_bL25_CTC"/>
    <property type="match status" value="1"/>
</dbReference>
<dbReference type="InterPro" id="IPR020056">
    <property type="entry name" value="Rbsml_bL25/Gln-tRNA_synth_N"/>
</dbReference>
<dbReference type="InterPro" id="IPR011035">
    <property type="entry name" value="Ribosomal_bL25/Gln-tRNA_synth"/>
</dbReference>
<dbReference type="InterPro" id="IPR020057">
    <property type="entry name" value="Ribosomal_bL25_b-dom"/>
</dbReference>
<dbReference type="InterPro" id="IPR037121">
    <property type="entry name" value="Ribosomal_bL25_C"/>
</dbReference>
<dbReference type="InterPro" id="IPR001021">
    <property type="entry name" value="Ribosomal_bL25_long"/>
</dbReference>
<dbReference type="InterPro" id="IPR029751">
    <property type="entry name" value="Ribosomal_L25_dom"/>
</dbReference>
<dbReference type="InterPro" id="IPR020930">
    <property type="entry name" value="Ribosomal_uL5_bac-type"/>
</dbReference>
<dbReference type="NCBIfam" id="TIGR00731">
    <property type="entry name" value="bL25_bact_ctc"/>
    <property type="match status" value="1"/>
</dbReference>
<dbReference type="NCBIfam" id="NF004132">
    <property type="entry name" value="PRK05618.2-2"/>
    <property type="match status" value="1"/>
</dbReference>
<dbReference type="PANTHER" id="PTHR33284">
    <property type="entry name" value="RIBOSOMAL PROTEIN L25/GLN-TRNA SYNTHETASE, ANTI-CODON-BINDING DOMAIN-CONTAINING PROTEIN"/>
    <property type="match status" value="1"/>
</dbReference>
<dbReference type="PANTHER" id="PTHR33284:SF1">
    <property type="entry name" value="RIBOSOMAL PROTEIN L25_GLN-TRNA SYNTHETASE, ANTI-CODON-BINDING DOMAIN-CONTAINING PROTEIN"/>
    <property type="match status" value="1"/>
</dbReference>
<dbReference type="Pfam" id="PF01386">
    <property type="entry name" value="Ribosomal_L25p"/>
    <property type="match status" value="1"/>
</dbReference>
<dbReference type="Pfam" id="PF14693">
    <property type="entry name" value="Ribosomal_TL5_C"/>
    <property type="match status" value="1"/>
</dbReference>
<dbReference type="SUPFAM" id="SSF50715">
    <property type="entry name" value="Ribosomal protein L25-like"/>
    <property type="match status" value="1"/>
</dbReference>
<name>RL25_BACFN</name>